<dbReference type="EC" id="2.4.2.-"/>
<dbReference type="EMBL" id="M74038">
    <property type="protein sequence ID" value="AAA23212.1"/>
    <property type="molecule type" value="Genomic_DNA"/>
</dbReference>
<dbReference type="PIR" id="A41021">
    <property type="entry name" value="A41021"/>
</dbReference>
<dbReference type="PDB" id="1R45">
    <property type="method" value="X-ray"/>
    <property type="resolution" value="1.57 A"/>
    <property type="chains" value="A/B/C/D=41-244"/>
</dbReference>
<dbReference type="PDB" id="1R4B">
    <property type="method" value="X-ray"/>
    <property type="resolution" value="1.85 A"/>
    <property type="chains" value="A/B=41-244"/>
</dbReference>
<dbReference type="PDBsum" id="1R45"/>
<dbReference type="PDBsum" id="1R4B"/>
<dbReference type="SMR" id="Q00901"/>
<dbReference type="EvolutionaryTrace" id="Q00901"/>
<dbReference type="GO" id="GO:0005576">
    <property type="term" value="C:extracellular region"/>
    <property type="evidence" value="ECO:0007669"/>
    <property type="project" value="UniProtKB-SubCell"/>
</dbReference>
<dbReference type="GO" id="GO:1990404">
    <property type="term" value="F:NAD+-protein mono-ADP-ribosyltransferase activity"/>
    <property type="evidence" value="ECO:0007669"/>
    <property type="project" value="InterPro"/>
</dbReference>
<dbReference type="GO" id="GO:0016779">
    <property type="term" value="F:nucleotidyltransferase activity"/>
    <property type="evidence" value="ECO:0007669"/>
    <property type="project" value="UniProtKB-KW"/>
</dbReference>
<dbReference type="CDD" id="cd00233">
    <property type="entry name" value="VIP2"/>
    <property type="match status" value="1"/>
</dbReference>
<dbReference type="Gene3D" id="3.90.176.10">
    <property type="entry name" value="Toxin ADP-ribosyltransferase, Chain A, domain 1"/>
    <property type="match status" value="1"/>
</dbReference>
<dbReference type="InterPro" id="IPR003540">
    <property type="entry name" value="ADP-ribosyltransferase"/>
</dbReference>
<dbReference type="InterPro" id="IPR016678">
    <property type="entry name" value="Mono-ADP_RibTrfase_C3/Edin"/>
</dbReference>
<dbReference type="Pfam" id="PF03496">
    <property type="entry name" value="ADPrib_exo_Tox"/>
    <property type="match status" value="1"/>
</dbReference>
<dbReference type="PIRSF" id="PIRSF016951">
    <property type="entry name" value="MADP_ribosyltransf_Edin"/>
    <property type="match status" value="1"/>
</dbReference>
<dbReference type="SUPFAM" id="SSF56399">
    <property type="entry name" value="ADP-ribosylation"/>
    <property type="match status" value="1"/>
</dbReference>
<dbReference type="PROSITE" id="PS51996">
    <property type="entry name" value="TR_MART"/>
    <property type="match status" value="1"/>
</dbReference>
<reference key="1">
    <citation type="journal article" date="1991" name="J. Biol. Chem.">
        <title>Clostridium botulinum C3 ADP-ribosyltransferase gene. Cloning, sequencing, and expression of a functional protein in Escherichia coli.</title>
        <authorList>
            <person name="Nemoto Y."/>
            <person name="Namba T."/>
            <person name="Kozaki S."/>
            <person name="Narumiya S."/>
        </authorList>
    </citation>
    <scope>NUCLEOTIDE SEQUENCE [GENOMIC DNA]</scope>
    <scope>PROTEIN SEQUENCE OF 41-232</scope>
    <source>
        <strain>003-9</strain>
    </source>
</reference>
<reference key="2">
    <citation type="journal article" date="1991" name="J. Bacteriol.">
        <title>Purification and characterization of ADP-ribosyltransferases (exoenzyme C3) of Clostridium botulinum type C and D strains.</title>
        <authorList>
            <person name="Moriishi K."/>
            <person name="Syuto B."/>
            <person name="Yokosawa N."/>
            <person name="Oguma K."/>
            <person name="Saito M."/>
        </authorList>
    </citation>
    <scope>PROTEIN SEQUENCE OF 41-59</scope>
    <source>
        <strain>6813</strain>
    </source>
</reference>
<evidence type="ECO:0000250" key="1">
    <source>
        <dbReference type="UniProtKB" id="P15879"/>
    </source>
</evidence>
<evidence type="ECO:0000255" key="2">
    <source>
        <dbReference type="PROSITE-ProRule" id="PRU01340"/>
    </source>
</evidence>
<evidence type="ECO:0000269" key="3">
    <source>
    </source>
</evidence>
<evidence type="ECO:0000269" key="4">
    <source>
    </source>
</evidence>
<evidence type="ECO:0000305" key="5"/>
<evidence type="ECO:0007829" key="6">
    <source>
        <dbReference type="PDB" id="1R45"/>
    </source>
</evidence>
<proteinExistence type="evidence at protein level"/>
<comment type="function">
    <text evidence="1">ADP-ribosylates eukaryotic Rho and Rac proteins on an asparagine residue.</text>
</comment>
<comment type="catalytic activity">
    <reaction evidence="1">
        <text>L-asparaginyl-[protein] + NAD(+) = N(4)-(ADP-D-ribosyl)-L-asparaginyl-[protein] + nicotinamide + H(+)</text>
        <dbReference type="Rhea" id="RHEA:58228"/>
        <dbReference type="Rhea" id="RHEA-COMP:12804"/>
        <dbReference type="Rhea" id="RHEA-COMP:15090"/>
        <dbReference type="ChEBI" id="CHEBI:15378"/>
        <dbReference type="ChEBI" id="CHEBI:17154"/>
        <dbReference type="ChEBI" id="CHEBI:50347"/>
        <dbReference type="ChEBI" id="CHEBI:57540"/>
        <dbReference type="ChEBI" id="CHEBI:142555"/>
    </reaction>
</comment>
<comment type="subunit">
    <text evidence="1">Monomer.</text>
</comment>
<comment type="subcellular location">
    <subcellularLocation>
        <location evidence="3 4">Secreted</location>
    </subcellularLocation>
</comment>
<comment type="similarity">
    <text evidence="5">To exoenzymes 3 of C.limosum and C.botulinum D phage, and to S.aureus ediN.</text>
</comment>
<name>ARC3_CBCP</name>
<accession>Q00901</accession>
<protein>
    <recommendedName>
        <fullName>Mono-ADP-ribosyltransferase C3</fullName>
        <ecNumber>2.4.2.-</ecNumber>
    </recommendedName>
    <alternativeName>
        <fullName>Exoenzyme C3</fullName>
    </alternativeName>
</protein>
<feature type="signal peptide" evidence="3 4">
    <location>
        <begin position="1"/>
        <end position="40"/>
    </location>
</feature>
<feature type="chain" id="PRO_0000020754" description="Mono-ADP-ribosyltransferase C3">
    <location>
        <begin position="41"/>
        <end position="244"/>
    </location>
</feature>
<feature type="domain" description="TR mART core" evidence="2">
    <location>
        <begin position="44"/>
        <end position="244"/>
    </location>
</feature>
<feature type="active site" evidence="2">
    <location>
        <position position="128"/>
    </location>
</feature>
<feature type="active site" evidence="2">
    <location>
        <position position="174"/>
    </location>
</feature>
<feature type="active site" evidence="2">
    <location>
        <position position="213"/>
    </location>
</feature>
<feature type="binding site" evidence="1">
    <location>
        <position position="80"/>
    </location>
    <ligand>
        <name>NAD(+)</name>
        <dbReference type="ChEBI" id="CHEBI:57540"/>
    </ligand>
</feature>
<feature type="binding site" evidence="1">
    <location>
        <position position="87"/>
    </location>
    <ligand>
        <name>NAD(+)</name>
        <dbReference type="ChEBI" id="CHEBI:57540"/>
    </ligand>
</feature>
<feature type="binding site" evidence="1">
    <location>
        <position position="91"/>
    </location>
    <ligand>
        <name>NAD(+)</name>
        <dbReference type="ChEBI" id="CHEBI:57540"/>
    </ligand>
</feature>
<feature type="binding site" evidence="1">
    <location>
        <begin position="128"/>
        <end position="131"/>
    </location>
    <ligand>
        <name>NAD(+)</name>
        <dbReference type="ChEBI" id="CHEBI:57540"/>
    </ligand>
</feature>
<feature type="binding site" evidence="1">
    <location>
        <begin position="167"/>
        <end position="169"/>
    </location>
    <ligand>
        <name>NAD(+)</name>
        <dbReference type="ChEBI" id="CHEBI:57540"/>
    </ligand>
</feature>
<feature type="binding site" evidence="1">
    <location>
        <begin position="182"/>
        <end position="185"/>
    </location>
    <ligand>
        <name>NAD(+)</name>
        <dbReference type="ChEBI" id="CHEBI:57540"/>
    </ligand>
</feature>
<feature type="binding site" evidence="1">
    <location>
        <begin position="211"/>
        <end position="213"/>
    </location>
    <ligand>
        <name>NAD(+)</name>
        <dbReference type="ChEBI" id="CHEBI:57540"/>
    </ligand>
</feature>
<feature type="site" description="Transition state stabilizer" evidence="1">
    <location>
        <position position="213"/>
    </location>
</feature>
<feature type="helix" evidence="6">
    <location>
        <begin position="52"/>
        <end position="63"/>
    </location>
</feature>
<feature type="helix" evidence="6">
    <location>
        <begin position="70"/>
        <end position="81"/>
    </location>
</feature>
<feature type="helix" evidence="6">
    <location>
        <begin position="84"/>
        <end position="92"/>
    </location>
</feature>
<feature type="turn" evidence="6">
    <location>
        <begin position="93"/>
        <end position="95"/>
    </location>
</feature>
<feature type="helix" evidence="6">
    <location>
        <begin position="97"/>
        <end position="99"/>
    </location>
</feature>
<feature type="helix" evidence="6">
    <location>
        <begin position="102"/>
        <end position="114"/>
    </location>
</feature>
<feature type="turn" evidence="6">
    <location>
        <begin position="115"/>
        <end position="117"/>
    </location>
</feature>
<feature type="strand" evidence="6">
    <location>
        <begin position="124"/>
        <end position="130"/>
    </location>
</feature>
<feature type="helix" evidence="6">
    <location>
        <begin position="132"/>
        <end position="135"/>
    </location>
</feature>
<feature type="helix" evidence="6">
    <location>
        <begin position="137"/>
        <end position="140"/>
    </location>
</feature>
<feature type="strand" evidence="6">
    <location>
        <begin position="148"/>
        <end position="150"/>
    </location>
</feature>
<feature type="helix" evidence="6">
    <location>
        <begin position="152"/>
        <end position="162"/>
    </location>
</feature>
<feature type="strand" evidence="6">
    <location>
        <begin position="165"/>
        <end position="167"/>
    </location>
</feature>
<feature type="strand" evidence="6">
    <location>
        <begin position="173"/>
        <end position="177"/>
    </location>
</feature>
<feature type="helix" evidence="6">
    <location>
        <begin position="180"/>
        <end position="182"/>
    </location>
</feature>
<feature type="strand" evidence="6">
    <location>
        <begin position="185"/>
        <end position="193"/>
    </location>
</feature>
<feature type="helix" evidence="6">
    <location>
        <begin position="203"/>
        <end position="205"/>
    </location>
</feature>
<feature type="strand" evidence="6">
    <location>
        <begin position="213"/>
        <end position="216"/>
    </location>
</feature>
<feature type="strand" evidence="6">
    <location>
        <begin position="222"/>
        <end position="229"/>
    </location>
</feature>
<feature type="strand" evidence="6">
    <location>
        <begin position="236"/>
        <end position="242"/>
    </location>
</feature>
<keyword id="KW-0002">3D-structure</keyword>
<keyword id="KW-0903">Direct protein sequencing</keyword>
<keyword id="KW-0328">Glycosyltransferase</keyword>
<keyword id="KW-0520">NAD</keyword>
<keyword id="KW-0548">Nucleotidyltransferase</keyword>
<keyword id="KW-0964">Secreted</keyword>
<keyword id="KW-0732">Signal</keyword>
<keyword id="KW-0808">Transferase</keyword>
<sequence>MKGIRKSILCLVLSAGVIAPVTTSIVQSPQKCYACTVDKGSYADTFTEFTNVEEAKKWGNAQYKKYGLSKPEQEAIKFYTRDASKINGPLRANQGNENGLPADILQKVKLIDQSFSKMKMPQNIILFRGDDPAYLGPEFQDKILNKDGTINKTVFEQVKAKFLKKDRTEYGYISTSLMSAQFGGRPIVTKFKVTNGSKGGYIDPISYFPGQLEVLLPRNNSYYISDMQISPNNRQIMITAMIFK</sequence>
<organism>
    <name type="scientific">Clostridium botulinum C phage</name>
    <name type="common">Clostridium botulinum C bacteriophage</name>
    <dbReference type="NCBI Taxonomy" id="12336"/>
    <lineage>
        <taxon>Viruses</taxon>
        <taxon>Duplodnaviria</taxon>
        <taxon>Heunggongvirae</taxon>
        <taxon>Uroviricota</taxon>
        <taxon>Caudoviricetes</taxon>
    </lineage>
</organism>
<organismHost>
    <name type="scientific">Clostridium botulinum C</name>
    <dbReference type="NCBI Taxonomy" id="36828"/>
</organismHost>